<protein>
    <recommendedName>
        <fullName evidence="1">tRNA pseudouridine synthase A</fullName>
        <ecNumber evidence="1">5.4.99.12</ecNumber>
    </recommendedName>
    <alternativeName>
        <fullName evidence="1">tRNA pseudouridine(38-40) synthase</fullName>
    </alternativeName>
    <alternativeName>
        <fullName evidence="1">tRNA pseudouridylate synthase I</fullName>
    </alternativeName>
    <alternativeName>
        <fullName evidence="1">tRNA-uridine isomerase I</fullName>
    </alternativeName>
</protein>
<proteinExistence type="inferred from homology"/>
<comment type="function">
    <text evidence="1">Formation of pseudouridine at positions 38, 39 and 40 in the anticodon stem and loop of transfer RNAs.</text>
</comment>
<comment type="catalytic activity">
    <reaction evidence="1">
        <text>uridine(38/39/40) in tRNA = pseudouridine(38/39/40) in tRNA</text>
        <dbReference type="Rhea" id="RHEA:22376"/>
        <dbReference type="Rhea" id="RHEA-COMP:10085"/>
        <dbReference type="Rhea" id="RHEA-COMP:10087"/>
        <dbReference type="ChEBI" id="CHEBI:65314"/>
        <dbReference type="ChEBI" id="CHEBI:65315"/>
        <dbReference type="EC" id="5.4.99.12"/>
    </reaction>
</comment>
<comment type="subunit">
    <text evidence="1">Homodimer.</text>
</comment>
<comment type="similarity">
    <text evidence="1">Belongs to the tRNA pseudouridine synthase TruA family.</text>
</comment>
<name>TRUA_ECO81</name>
<gene>
    <name evidence="1" type="primary">truA</name>
    <name type="ordered locus">ECED1_2782</name>
</gene>
<organism>
    <name type="scientific">Escherichia coli O81 (strain ED1a)</name>
    <dbReference type="NCBI Taxonomy" id="585397"/>
    <lineage>
        <taxon>Bacteria</taxon>
        <taxon>Pseudomonadati</taxon>
        <taxon>Pseudomonadota</taxon>
        <taxon>Gammaproteobacteria</taxon>
        <taxon>Enterobacterales</taxon>
        <taxon>Enterobacteriaceae</taxon>
        <taxon>Escherichia</taxon>
    </lineage>
</organism>
<dbReference type="EC" id="5.4.99.12" evidence="1"/>
<dbReference type="EMBL" id="CU928162">
    <property type="protein sequence ID" value="CAR08961.2"/>
    <property type="molecule type" value="Genomic_DNA"/>
</dbReference>
<dbReference type="RefSeq" id="WP_001283598.1">
    <property type="nucleotide sequence ID" value="NC_011745.1"/>
</dbReference>
<dbReference type="SMR" id="B7MXZ5"/>
<dbReference type="KEGG" id="ecq:ECED1_2782"/>
<dbReference type="HOGENOM" id="CLU_014673_0_2_6"/>
<dbReference type="Proteomes" id="UP000000748">
    <property type="component" value="Chromosome"/>
</dbReference>
<dbReference type="GO" id="GO:0003723">
    <property type="term" value="F:RNA binding"/>
    <property type="evidence" value="ECO:0007669"/>
    <property type="project" value="InterPro"/>
</dbReference>
<dbReference type="GO" id="GO:0160147">
    <property type="term" value="F:tRNA pseudouridine(38-40) synthase activity"/>
    <property type="evidence" value="ECO:0007669"/>
    <property type="project" value="UniProtKB-EC"/>
</dbReference>
<dbReference type="GO" id="GO:0031119">
    <property type="term" value="P:tRNA pseudouridine synthesis"/>
    <property type="evidence" value="ECO:0007669"/>
    <property type="project" value="UniProtKB-UniRule"/>
</dbReference>
<dbReference type="CDD" id="cd02570">
    <property type="entry name" value="PseudoU_synth_EcTruA"/>
    <property type="match status" value="1"/>
</dbReference>
<dbReference type="FunFam" id="3.30.70.580:FF:000001">
    <property type="entry name" value="tRNA pseudouridine synthase A"/>
    <property type="match status" value="1"/>
</dbReference>
<dbReference type="FunFam" id="3.30.70.660:FF:000001">
    <property type="entry name" value="tRNA pseudouridine synthase A"/>
    <property type="match status" value="1"/>
</dbReference>
<dbReference type="Gene3D" id="3.30.70.660">
    <property type="entry name" value="Pseudouridine synthase I, catalytic domain, C-terminal subdomain"/>
    <property type="match status" value="1"/>
</dbReference>
<dbReference type="Gene3D" id="3.30.70.580">
    <property type="entry name" value="Pseudouridine synthase I, catalytic domain, N-terminal subdomain"/>
    <property type="match status" value="1"/>
</dbReference>
<dbReference type="HAMAP" id="MF_00171">
    <property type="entry name" value="TruA"/>
    <property type="match status" value="1"/>
</dbReference>
<dbReference type="InterPro" id="IPR020103">
    <property type="entry name" value="PsdUridine_synth_cat_dom_sf"/>
</dbReference>
<dbReference type="InterPro" id="IPR001406">
    <property type="entry name" value="PsdUridine_synth_TruA"/>
</dbReference>
<dbReference type="InterPro" id="IPR020097">
    <property type="entry name" value="PsdUridine_synth_TruA_a/b_dom"/>
</dbReference>
<dbReference type="InterPro" id="IPR020095">
    <property type="entry name" value="PsdUridine_synth_TruA_C"/>
</dbReference>
<dbReference type="InterPro" id="IPR020094">
    <property type="entry name" value="TruA/RsuA/RluB/E/F_N"/>
</dbReference>
<dbReference type="NCBIfam" id="TIGR00071">
    <property type="entry name" value="hisT_truA"/>
    <property type="match status" value="1"/>
</dbReference>
<dbReference type="PANTHER" id="PTHR11142">
    <property type="entry name" value="PSEUDOURIDYLATE SYNTHASE"/>
    <property type="match status" value="1"/>
</dbReference>
<dbReference type="PANTHER" id="PTHR11142:SF0">
    <property type="entry name" value="TRNA PSEUDOURIDINE SYNTHASE-LIKE 1"/>
    <property type="match status" value="1"/>
</dbReference>
<dbReference type="Pfam" id="PF01416">
    <property type="entry name" value="PseudoU_synth_1"/>
    <property type="match status" value="2"/>
</dbReference>
<dbReference type="PIRSF" id="PIRSF001430">
    <property type="entry name" value="tRNA_psdUrid_synth"/>
    <property type="match status" value="1"/>
</dbReference>
<dbReference type="SUPFAM" id="SSF55120">
    <property type="entry name" value="Pseudouridine synthase"/>
    <property type="match status" value="1"/>
</dbReference>
<feature type="chain" id="PRO_1000194556" description="tRNA pseudouridine synthase A">
    <location>
        <begin position="1"/>
        <end position="270"/>
    </location>
</feature>
<feature type="region of interest" description="RNA binding" evidence="1">
    <location>
        <begin position="107"/>
        <end position="111"/>
    </location>
</feature>
<feature type="region of interest" description="Interaction with tRNA" evidence="1">
    <location>
        <begin position="168"/>
        <end position="172"/>
    </location>
</feature>
<feature type="active site" description="Nucleophile" evidence="1">
    <location>
        <position position="60"/>
    </location>
</feature>
<feature type="binding site" evidence="1">
    <location>
        <position position="118"/>
    </location>
    <ligand>
        <name>substrate</name>
    </ligand>
</feature>
<feature type="site" description="Interaction with tRNA; Important for base-flipping" evidence="1">
    <location>
        <position position="58"/>
    </location>
</feature>
<feature type="site" description="Interaction with tRNA" evidence="1">
    <location>
        <position position="78"/>
    </location>
</feature>
<feature type="site" description="Interaction with tRNA" evidence="1">
    <location>
        <position position="110"/>
    </location>
</feature>
<feature type="site" description="Interaction with tRNA" evidence="1">
    <location>
        <position position="126"/>
    </location>
</feature>
<feature type="site" description="Interaction with tRNA" evidence="1">
    <location>
        <position position="139"/>
    </location>
</feature>
<accession>B7MXZ5</accession>
<sequence length="270" mass="30413">MSDQQQPPVYKIALGIEYDGSRYYGWQRQNEVRSVQEKLEKALSQVANEPITVFCAGRTDAGVHGTGQVVHFETTAQRKDAAWTLGVNANLPGDIAVRWVKAVPDDFHARFSATARRYRYIIYNHRLRPAVLSKGVTHFYEPLDAERMHRAAQCLLGENDFTSFRAVQCQSRTPWRNVMHINVTRHGPYVVVDIKANAFVHHMVRNIVGSLMEVGAHNQPESWIAELLAAKDRTLAAATAKAEGLYLVAVDYPDRYDLPKPPMGPLFLAD</sequence>
<reference key="1">
    <citation type="journal article" date="2009" name="PLoS Genet.">
        <title>Organised genome dynamics in the Escherichia coli species results in highly diverse adaptive paths.</title>
        <authorList>
            <person name="Touchon M."/>
            <person name="Hoede C."/>
            <person name="Tenaillon O."/>
            <person name="Barbe V."/>
            <person name="Baeriswyl S."/>
            <person name="Bidet P."/>
            <person name="Bingen E."/>
            <person name="Bonacorsi S."/>
            <person name="Bouchier C."/>
            <person name="Bouvet O."/>
            <person name="Calteau A."/>
            <person name="Chiapello H."/>
            <person name="Clermont O."/>
            <person name="Cruveiller S."/>
            <person name="Danchin A."/>
            <person name="Diard M."/>
            <person name="Dossat C."/>
            <person name="Karoui M.E."/>
            <person name="Frapy E."/>
            <person name="Garry L."/>
            <person name="Ghigo J.M."/>
            <person name="Gilles A.M."/>
            <person name="Johnson J."/>
            <person name="Le Bouguenec C."/>
            <person name="Lescat M."/>
            <person name="Mangenot S."/>
            <person name="Martinez-Jehanne V."/>
            <person name="Matic I."/>
            <person name="Nassif X."/>
            <person name="Oztas S."/>
            <person name="Petit M.A."/>
            <person name="Pichon C."/>
            <person name="Rouy Z."/>
            <person name="Ruf C.S."/>
            <person name="Schneider D."/>
            <person name="Tourret J."/>
            <person name="Vacherie B."/>
            <person name="Vallenet D."/>
            <person name="Medigue C."/>
            <person name="Rocha E.P.C."/>
            <person name="Denamur E."/>
        </authorList>
    </citation>
    <scope>NUCLEOTIDE SEQUENCE [LARGE SCALE GENOMIC DNA]</scope>
    <source>
        <strain>ED1a</strain>
    </source>
</reference>
<evidence type="ECO:0000255" key="1">
    <source>
        <dbReference type="HAMAP-Rule" id="MF_00171"/>
    </source>
</evidence>
<keyword id="KW-0413">Isomerase</keyword>
<keyword id="KW-0819">tRNA processing</keyword>